<evidence type="ECO:0000256" key="1">
    <source>
        <dbReference type="SAM" id="MobiDB-lite"/>
    </source>
</evidence>
<evidence type="ECO:0000269" key="2">
    <source>
    </source>
</evidence>
<evidence type="ECO:0000269" key="3">
    <source>
    </source>
</evidence>
<evidence type="ECO:0000305" key="4"/>
<evidence type="ECO:0007744" key="5">
    <source>
    </source>
</evidence>
<evidence type="ECO:0007744" key="6">
    <source>
    </source>
</evidence>
<evidence type="ECO:0007744" key="7">
    <source>
    </source>
</evidence>
<sequence length="366" mass="40663">MNQTGRTIGGPQNGVNTVINPFRVSPSEDRVSSRDETPRNYNNPFLNEDDTRRAHNSSVSNSRQERLPSYEEAAGTPKQQAPYPKEKKRSSGSNSHQHNHHHHRRTSHGHRDKDKQKSKSRTKVKPPKNVDTIDKMDVTGLFGGSFHHDGPFDACTPQRNKNNKVAPVLAFPADGPNNTVGGRTSKKSTLDEVFGRETVDDDSETLNQLQDRAYLFNKANSSTTTLDAIKPNSKNITQFDSKMKTELVHGPITMGLGSTTFLDGAPASSAAIEQDVINHAQESRRKNSIARKKSLPSRRHLQVNNNNLKLVKTHSGHLEQKDVDDNRTSVPVTATQGSGHEDVVKKENTGNKLLRRVKSLKTSKKH</sequence>
<feature type="chain" id="PRO_0000202907" description="Uncharacterized protein YHR097C">
    <location>
        <begin position="1"/>
        <end position="366"/>
    </location>
</feature>
<feature type="region of interest" description="Disordered" evidence="1">
    <location>
        <begin position="1"/>
        <end position="135"/>
    </location>
</feature>
<feature type="region of interest" description="Disordered" evidence="1">
    <location>
        <begin position="313"/>
        <end position="366"/>
    </location>
</feature>
<feature type="compositionally biased region" description="Basic and acidic residues" evidence="1">
    <location>
        <begin position="26"/>
        <end position="38"/>
    </location>
</feature>
<feature type="compositionally biased region" description="Basic residues" evidence="1">
    <location>
        <begin position="97"/>
        <end position="108"/>
    </location>
</feature>
<feature type="compositionally biased region" description="Basic and acidic residues" evidence="1">
    <location>
        <begin position="316"/>
        <end position="327"/>
    </location>
</feature>
<feature type="compositionally biased region" description="Polar residues" evidence="1">
    <location>
        <begin position="328"/>
        <end position="338"/>
    </location>
</feature>
<feature type="compositionally biased region" description="Basic and acidic residues" evidence="1">
    <location>
        <begin position="339"/>
        <end position="349"/>
    </location>
</feature>
<feature type="compositionally biased region" description="Basic residues" evidence="1">
    <location>
        <begin position="353"/>
        <end position="366"/>
    </location>
</feature>
<feature type="modified residue" description="Phosphoserine" evidence="7">
    <location>
        <position position="69"/>
    </location>
</feature>
<feature type="modified residue" description="Phosphothreonine" evidence="7">
    <location>
        <position position="76"/>
    </location>
</feature>
<feature type="modified residue" description="Phosphothreonine" evidence="6">
    <location>
        <position position="189"/>
    </location>
</feature>
<feature type="modified residue" description="Phosphoserine" evidence="5">
    <location>
        <position position="288"/>
    </location>
</feature>
<feature type="modified residue" description="Phosphoserine" evidence="5">
    <location>
        <position position="294"/>
    </location>
</feature>
<feature type="modified residue" description="Phosphoserine" evidence="5">
    <location>
        <position position="359"/>
    </location>
</feature>
<feature type="cross-link" description="Glycyl lysine isopeptide (Lys-Gly) (interchain with G-Cter in ubiquitin)" evidence="2">
    <location>
        <position position="78"/>
    </location>
</feature>
<feature type="cross-link" description="Glycyl lysine isopeptide (Lys-Gly) (interchain with G-Cter in ubiquitin)" evidence="2">
    <location>
        <position position="187"/>
    </location>
</feature>
<feature type="cross-link" description="Glycyl lysine isopeptide (Lys-Gly) (interchain with G-Cter in ubiquitin)" evidence="2">
    <location>
        <position position="242"/>
    </location>
</feature>
<proteinExistence type="evidence at protein level"/>
<keyword id="KW-0963">Cytoplasm</keyword>
<keyword id="KW-1017">Isopeptide bond</keyword>
<keyword id="KW-0539">Nucleus</keyword>
<keyword id="KW-0597">Phosphoprotein</keyword>
<keyword id="KW-1185">Reference proteome</keyword>
<keyword id="KW-0832">Ubl conjugation</keyword>
<protein>
    <recommendedName>
        <fullName>Uncharacterized protein YHR097C</fullName>
    </recommendedName>
</protein>
<reference key="1">
    <citation type="journal article" date="1994" name="Science">
        <title>Complete nucleotide sequence of Saccharomyces cerevisiae chromosome VIII.</title>
        <authorList>
            <person name="Johnston M."/>
            <person name="Andrews S."/>
            <person name="Brinkman R."/>
            <person name="Cooper J."/>
            <person name="Ding H."/>
            <person name="Dover J."/>
            <person name="Du Z."/>
            <person name="Favello A."/>
            <person name="Fulton L."/>
            <person name="Gattung S."/>
            <person name="Geisel C."/>
            <person name="Kirsten J."/>
            <person name="Kucaba T."/>
            <person name="Hillier L.W."/>
            <person name="Jier M."/>
            <person name="Johnston L."/>
            <person name="Langston Y."/>
            <person name="Latreille P."/>
            <person name="Louis E.J."/>
            <person name="Macri C."/>
            <person name="Mardis E."/>
            <person name="Menezes S."/>
            <person name="Mouser L."/>
            <person name="Nhan M."/>
            <person name="Rifkin L."/>
            <person name="Riles L."/>
            <person name="St Peter H."/>
            <person name="Trevaskis E."/>
            <person name="Vaughan K."/>
            <person name="Vignati D."/>
            <person name="Wilcox L."/>
            <person name="Wohldman P."/>
            <person name="Waterston R."/>
            <person name="Wilson R."/>
            <person name="Vaudin M."/>
        </authorList>
    </citation>
    <scope>NUCLEOTIDE SEQUENCE [LARGE SCALE GENOMIC DNA]</scope>
    <source>
        <strain>ATCC 204508 / S288c</strain>
    </source>
</reference>
<reference key="2">
    <citation type="journal article" date="2014" name="G3 (Bethesda)">
        <title>The reference genome sequence of Saccharomyces cerevisiae: Then and now.</title>
        <authorList>
            <person name="Engel S.R."/>
            <person name="Dietrich F.S."/>
            <person name="Fisk D.G."/>
            <person name="Binkley G."/>
            <person name="Balakrishnan R."/>
            <person name="Costanzo M.C."/>
            <person name="Dwight S.S."/>
            <person name="Hitz B.C."/>
            <person name="Karra K."/>
            <person name="Nash R.S."/>
            <person name="Weng S."/>
            <person name="Wong E.D."/>
            <person name="Lloyd P."/>
            <person name="Skrzypek M.S."/>
            <person name="Miyasato S.R."/>
            <person name="Simison M."/>
            <person name="Cherry J.M."/>
        </authorList>
    </citation>
    <scope>GENOME REANNOTATION</scope>
    <source>
        <strain>ATCC 204508 / S288c</strain>
    </source>
</reference>
<reference key="3">
    <citation type="journal article" date="2003" name="Nat. Biotechnol.">
        <title>A proteomics approach to understanding protein ubiquitination.</title>
        <authorList>
            <person name="Peng J."/>
            <person name="Schwartz D."/>
            <person name="Elias J.E."/>
            <person name="Thoreen C.C."/>
            <person name="Cheng D."/>
            <person name="Marsischky G."/>
            <person name="Roelofs J."/>
            <person name="Finley D."/>
            <person name="Gygi S.P."/>
        </authorList>
    </citation>
    <scope>UBIQUITINATION [LARGE SCALE ANALYSIS] AT LYS-78; LYS-187 AND LYS-242</scope>
    <scope>IDENTIFICATION BY MASS SPECTROMETRY</scope>
    <source>
        <strain>SUB592</strain>
    </source>
</reference>
<reference key="4">
    <citation type="journal article" date="2003" name="Nature">
        <title>Global analysis of protein localization in budding yeast.</title>
        <authorList>
            <person name="Huh W.-K."/>
            <person name="Falvo J.V."/>
            <person name="Gerke L.C."/>
            <person name="Carroll A.S."/>
            <person name="Howson R.W."/>
            <person name="Weissman J.S."/>
            <person name="O'Shea E.K."/>
        </authorList>
    </citation>
    <scope>SUBCELLULAR LOCATION [LARGE SCALE ANALYSIS]</scope>
</reference>
<reference key="5">
    <citation type="journal article" date="2007" name="J. Proteome Res.">
        <title>Large-scale phosphorylation analysis of alpha-factor-arrested Saccharomyces cerevisiae.</title>
        <authorList>
            <person name="Li X."/>
            <person name="Gerber S.A."/>
            <person name="Rudner A.D."/>
            <person name="Beausoleil S.A."/>
            <person name="Haas W."/>
            <person name="Villen J."/>
            <person name="Elias J.E."/>
            <person name="Gygi S.P."/>
        </authorList>
    </citation>
    <scope>PHOSPHORYLATION [LARGE SCALE ANALYSIS] AT THR-189</scope>
    <scope>IDENTIFICATION BY MASS SPECTROMETRY [LARGE SCALE ANALYSIS]</scope>
    <source>
        <strain>ADR376</strain>
    </source>
</reference>
<reference key="6">
    <citation type="journal article" date="2007" name="Proc. Natl. Acad. Sci. U.S.A.">
        <title>Analysis of phosphorylation sites on proteins from Saccharomyces cerevisiae by electron transfer dissociation (ETD) mass spectrometry.</title>
        <authorList>
            <person name="Chi A."/>
            <person name="Huttenhower C."/>
            <person name="Geer L.Y."/>
            <person name="Coon J.J."/>
            <person name="Syka J.E.P."/>
            <person name="Bai D.L."/>
            <person name="Shabanowitz J."/>
            <person name="Burke D.J."/>
            <person name="Troyanskaya O.G."/>
            <person name="Hunt D.F."/>
        </authorList>
    </citation>
    <scope>PHOSPHORYLATION [LARGE SCALE ANALYSIS] AT SER-288; SER-294 AND SER-359</scope>
    <scope>IDENTIFICATION BY MASS SPECTROMETRY [LARGE SCALE ANALYSIS]</scope>
</reference>
<reference key="7">
    <citation type="journal article" date="2008" name="Mol. Cell. Proteomics">
        <title>A multidimensional chromatography technology for in-depth phosphoproteome analysis.</title>
        <authorList>
            <person name="Albuquerque C.P."/>
            <person name="Smolka M.B."/>
            <person name="Payne S.H."/>
            <person name="Bafna V."/>
            <person name="Eng J."/>
            <person name="Zhou H."/>
        </authorList>
    </citation>
    <scope>IDENTIFICATION BY MASS SPECTROMETRY [LARGE SCALE ANALYSIS]</scope>
</reference>
<reference key="8">
    <citation type="journal article" date="2009" name="Science">
        <title>Global analysis of Cdk1 substrate phosphorylation sites provides insights into evolution.</title>
        <authorList>
            <person name="Holt L.J."/>
            <person name="Tuch B.B."/>
            <person name="Villen J."/>
            <person name="Johnson A.D."/>
            <person name="Gygi S.P."/>
            <person name="Morgan D.O."/>
        </authorList>
    </citation>
    <scope>PHOSPHORYLATION [LARGE SCALE ANALYSIS] AT SER-69 AND THR-76</scope>
    <scope>IDENTIFICATION BY MASS SPECTROMETRY [LARGE SCALE ANALYSIS]</scope>
</reference>
<comment type="subcellular location">
    <subcellularLocation>
        <location evidence="3">Cytoplasm</location>
    </subcellularLocation>
    <subcellularLocation>
        <location evidence="3">Nucleus</location>
    </subcellularLocation>
</comment>
<comment type="similarity">
    <text evidence="4">Belongs to the pal1 family.</text>
</comment>
<organism>
    <name type="scientific">Saccharomyces cerevisiae (strain ATCC 204508 / S288c)</name>
    <name type="common">Baker's yeast</name>
    <dbReference type="NCBI Taxonomy" id="559292"/>
    <lineage>
        <taxon>Eukaryota</taxon>
        <taxon>Fungi</taxon>
        <taxon>Dikarya</taxon>
        <taxon>Ascomycota</taxon>
        <taxon>Saccharomycotina</taxon>
        <taxon>Saccharomycetes</taxon>
        <taxon>Saccharomycetales</taxon>
        <taxon>Saccharomycetaceae</taxon>
        <taxon>Saccharomyces</taxon>
    </lineage>
</organism>
<name>YHP7_YEAST</name>
<accession>P38809</accession>
<accession>D3DL47</accession>
<dbReference type="EMBL" id="U00060">
    <property type="protein sequence ID" value="AAB68935.1"/>
    <property type="molecule type" value="Genomic_DNA"/>
</dbReference>
<dbReference type="EMBL" id="BK006934">
    <property type="protein sequence ID" value="DAA06791.1"/>
    <property type="molecule type" value="Genomic_DNA"/>
</dbReference>
<dbReference type="PIR" id="S46727">
    <property type="entry name" value="S46727"/>
</dbReference>
<dbReference type="BioGRID" id="36530">
    <property type="interactions" value="75"/>
</dbReference>
<dbReference type="FunCoup" id="P38809">
    <property type="interactions" value="146"/>
</dbReference>
<dbReference type="IntAct" id="P38809">
    <property type="interactions" value="14"/>
</dbReference>
<dbReference type="MINT" id="P38809"/>
<dbReference type="STRING" id="4932.YHR097C"/>
<dbReference type="GlyGen" id="P38809">
    <property type="glycosylation" value="3 sites, 1 O-linked glycan (3 sites)"/>
</dbReference>
<dbReference type="iPTMnet" id="P38809"/>
<dbReference type="PaxDb" id="4932-YHR097C"/>
<dbReference type="PeptideAtlas" id="P38809"/>
<dbReference type="EnsemblFungi" id="YHR097C_mRNA">
    <property type="protein sequence ID" value="YHR097C"/>
    <property type="gene ID" value="YHR097C"/>
</dbReference>
<dbReference type="KEGG" id="sce:YHR097C"/>
<dbReference type="AGR" id="SGD:S000001139"/>
<dbReference type="SGD" id="S000001139">
    <property type="gene designation" value="YHR097C"/>
</dbReference>
<dbReference type="VEuPathDB" id="FungiDB:YHR097C"/>
<dbReference type="eggNOG" id="ENOG502QPHY">
    <property type="taxonomic scope" value="Eukaryota"/>
</dbReference>
<dbReference type="GeneTree" id="ENSGT00940000176601"/>
<dbReference type="HOGENOM" id="CLU_041195_1_0_1"/>
<dbReference type="InParanoid" id="P38809"/>
<dbReference type="OMA" id="INHAQES"/>
<dbReference type="OrthoDB" id="5352132at2759"/>
<dbReference type="BioCyc" id="YEAST:G3O-31142-MONOMER"/>
<dbReference type="BioGRID-ORCS" id="856497">
    <property type="hits" value="1 hit in 10 CRISPR screens"/>
</dbReference>
<dbReference type="PRO" id="PR:P38809"/>
<dbReference type="Proteomes" id="UP000002311">
    <property type="component" value="Chromosome VIII"/>
</dbReference>
<dbReference type="RNAct" id="P38809">
    <property type="molecule type" value="protein"/>
</dbReference>
<dbReference type="GO" id="GO:0030479">
    <property type="term" value="C:actin cortical patch"/>
    <property type="evidence" value="ECO:0000314"/>
    <property type="project" value="SGD"/>
</dbReference>
<dbReference type="GO" id="GO:0005737">
    <property type="term" value="C:cytoplasm"/>
    <property type="evidence" value="ECO:0007005"/>
    <property type="project" value="SGD"/>
</dbReference>
<dbReference type="GO" id="GO:0034399">
    <property type="term" value="C:nuclear periphery"/>
    <property type="evidence" value="ECO:0000314"/>
    <property type="project" value="SGD"/>
</dbReference>
<dbReference type="GO" id="GO:0005634">
    <property type="term" value="C:nucleus"/>
    <property type="evidence" value="ECO:0007005"/>
    <property type="project" value="SGD"/>
</dbReference>
<dbReference type="InterPro" id="IPR013226">
    <property type="entry name" value="Pal1"/>
</dbReference>
<dbReference type="PANTHER" id="PTHR28307">
    <property type="entry name" value="PROTEIN PAL1"/>
    <property type="match status" value="1"/>
</dbReference>
<dbReference type="PANTHER" id="PTHR28307:SF2">
    <property type="entry name" value="PROTEIN PAL1"/>
    <property type="match status" value="1"/>
</dbReference>
<dbReference type="Pfam" id="PF08316">
    <property type="entry name" value="Pal1"/>
    <property type="match status" value="1"/>
</dbReference>
<gene>
    <name type="ordered locus">YHR097C</name>
</gene>